<feature type="chain" id="PRO_1000057027" description="Adenine phosphoribosyltransferase">
    <location>
        <begin position="1"/>
        <end position="170"/>
    </location>
</feature>
<dbReference type="EC" id="2.4.2.7" evidence="1"/>
<dbReference type="EMBL" id="CP000724">
    <property type="protein sequence ID" value="ABR48506.1"/>
    <property type="molecule type" value="Genomic_DNA"/>
</dbReference>
<dbReference type="RefSeq" id="WP_012063481.1">
    <property type="nucleotide sequence ID" value="NC_009633.1"/>
</dbReference>
<dbReference type="SMR" id="A6TQN8"/>
<dbReference type="STRING" id="293826.Amet_2352"/>
<dbReference type="KEGG" id="amt:Amet_2352"/>
<dbReference type="eggNOG" id="COG0503">
    <property type="taxonomic scope" value="Bacteria"/>
</dbReference>
<dbReference type="HOGENOM" id="CLU_063339_3_0_9"/>
<dbReference type="OrthoDB" id="9803963at2"/>
<dbReference type="UniPathway" id="UPA00588">
    <property type="reaction ID" value="UER00646"/>
</dbReference>
<dbReference type="Proteomes" id="UP000001572">
    <property type="component" value="Chromosome"/>
</dbReference>
<dbReference type="GO" id="GO:0005737">
    <property type="term" value="C:cytoplasm"/>
    <property type="evidence" value="ECO:0007669"/>
    <property type="project" value="UniProtKB-SubCell"/>
</dbReference>
<dbReference type="GO" id="GO:0002055">
    <property type="term" value="F:adenine binding"/>
    <property type="evidence" value="ECO:0007669"/>
    <property type="project" value="TreeGrafter"/>
</dbReference>
<dbReference type="GO" id="GO:0003999">
    <property type="term" value="F:adenine phosphoribosyltransferase activity"/>
    <property type="evidence" value="ECO:0007669"/>
    <property type="project" value="UniProtKB-UniRule"/>
</dbReference>
<dbReference type="GO" id="GO:0016208">
    <property type="term" value="F:AMP binding"/>
    <property type="evidence" value="ECO:0007669"/>
    <property type="project" value="TreeGrafter"/>
</dbReference>
<dbReference type="GO" id="GO:0006168">
    <property type="term" value="P:adenine salvage"/>
    <property type="evidence" value="ECO:0007669"/>
    <property type="project" value="InterPro"/>
</dbReference>
<dbReference type="GO" id="GO:0044209">
    <property type="term" value="P:AMP salvage"/>
    <property type="evidence" value="ECO:0007669"/>
    <property type="project" value="UniProtKB-UniRule"/>
</dbReference>
<dbReference type="GO" id="GO:0006166">
    <property type="term" value="P:purine ribonucleoside salvage"/>
    <property type="evidence" value="ECO:0007669"/>
    <property type="project" value="UniProtKB-KW"/>
</dbReference>
<dbReference type="CDD" id="cd06223">
    <property type="entry name" value="PRTases_typeI"/>
    <property type="match status" value="1"/>
</dbReference>
<dbReference type="FunFam" id="3.40.50.2020:FF:000004">
    <property type="entry name" value="Adenine phosphoribosyltransferase"/>
    <property type="match status" value="1"/>
</dbReference>
<dbReference type="Gene3D" id="3.40.50.2020">
    <property type="match status" value="1"/>
</dbReference>
<dbReference type="HAMAP" id="MF_00004">
    <property type="entry name" value="Aden_phosphoribosyltr"/>
    <property type="match status" value="1"/>
</dbReference>
<dbReference type="InterPro" id="IPR005764">
    <property type="entry name" value="Ade_phspho_trans"/>
</dbReference>
<dbReference type="InterPro" id="IPR000836">
    <property type="entry name" value="PRibTrfase_dom"/>
</dbReference>
<dbReference type="InterPro" id="IPR029057">
    <property type="entry name" value="PRTase-like"/>
</dbReference>
<dbReference type="InterPro" id="IPR050054">
    <property type="entry name" value="UPRTase/APRTase"/>
</dbReference>
<dbReference type="NCBIfam" id="TIGR01090">
    <property type="entry name" value="apt"/>
    <property type="match status" value="1"/>
</dbReference>
<dbReference type="NCBIfam" id="NF002633">
    <property type="entry name" value="PRK02304.1-2"/>
    <property type="match status" value="1"/>
</dbReference>
<dbReference type="NCBIfam" id="NF002634">
    <property type="entry name" value="PRK02304.1-3"/>
    <property type="match status" value="1"/>
</dbReference>
<dbReference type="NCBIfam" id="NF002636">
    <property type="entry name" value="PRK02304.1-5"/>
    <property type="match status" value="1"/>
</dbReference>
<dbReference type="PANTHER" id="PTHR32315">
    <property type="entry name" value="ADENINE PHOSPHORIBOSYLTRANSFERASE"/>
    <property type="match status" value="1"/>
</dbReference>
<dbReference type="PANTHER" id="PTHR32315:SF3">
    <property type="entry name" value="ADENINE PHOSPHORIBOSYLTRANSFERASE"/>
    <property type="match status" value="1"/>
</dbReference>
<dbReference type="Pfam" id="PF00156">
    <property type="entry name" value="Pribosyltran"/>
    <property type="match status" value="1"/>
</dbReference>
<dbReference type="SUPFAM" id="SSF53271">
    <property type="entry name" value="PRTase-like"/>
    <property type="match status" value="1"/>
</dbReference>
<comment type="function">
    <text evidence="1">Catalyzes a salvage reaction resulting in the formation of AMP, that is energically less costly than de novo synthesis.</text>
</comment>
<comment type="catalytic activity">
    <reaction evidence="1">
        <text>AMP + diphosphate = 5-phospho-alpha-D-ribose 1-diphosphate + adenine</text>
        <dbReference type="Rhea" id="RHEA:16609"/>
        <dbReference type="ChEBI" id="CHEBI:16708"/>
        <dbReference type="ChEBI" id="CHEBI:33019"/>
        <dbReference type="ChEBI" id="CHEBI:58017"/>
        <dbReference type="ChEBI" id="CHEBI:456215"/>
        <dbReference type="EC" id="2.4.2.7"/>
    </reaction>
</comment>
<comment type="pathway">
    <text evidence="1">Purine metabolism; AMP biosynthesis via salvage pathway; AMP from adenine: step 1/1.</text>
</comment>
<comment type="subunit">
    <text evidence="1">Homodimer.</text>
</comment>
<comment type="subcellular location">
    <subcellularLocation>
        <location evidence="1">Cytoplasm</location>
    </subcellularLocation>
</comment>
<comment type="similarity">
    <text evidence="1">Belongs to the purine/pyrimidine phosphoribosyltransferase family.</text>
</comment>
<keyword id="KW-0963">Cytoplasm</keyword>
<keyword id="KW-0328">Glycosyltransferase</keyword>
<keyword id="KW-0660">Purine salvage</keyword>
<keyword id="KW-1185">Reference proteome</keyword>
<keyword id="KW-0808">Transferase</keyword>
<sequence length="170" mass="18488">MNLDSKIRVIEDFPKKGISFKDITTLLKDKEAFRSMVDQLSDQLIDLDIDIVVGPEARGFLVGAPVAYKIGAGFVPIRKPGKLPGETISYEYELEYGTDSLEIHTDAIQPGQRVAILDDLLATGGTVVATAKLIEELGGEVVSINFLIELGFLNGGEVLKGYSVKSLLKY</sequence>
<protein>
    <recommendedName>
        <fullName evidence="1">Adenine phosphoribosyltransferase</fullName>
        <shortName evidence="1">APRT</shortName>
        <ecNumber evidence="1">2.4.2.7</ecNumber>
    </recommendedName>
</protein>
<name>APT_ALKMQ</name>
<accession>A6TQN8</accession>
<reference key="1">
    <citation type="journal article" date="2016" name="Genome Announc.">
        <title>Complete genome sequence of Alkaliphilus metalliredigens strain QYMF, an alkaliphilic and metal-reducing bacterium isolated from borax-contaminated leachate ponds.</title>
        <authorList>
            <person name="Hwang C."/>
            <person name="Copeland A."/>
            <person name="Lucas S."/>
            <person name="Lapidus A."/>
            <person name="Barry K."/>
            <person name="Detter J.C."/>
            <person name="Glavina Del Rio T."/>
            <person name="Hammon N."/>
            <person name="Israni S."/>
            <person name="Dalin E."/>
            <person name="Tice H."/>
            <person name="Pitluck S."/>
            <person name="Chertkov O."/>
            <person name="Brettin T."/>
            <person name="Bruce D."/>
            <person name="Han C."/>
            <person name="Schmutz J."/>
            <person name="Larimer F."/>
            <person name="Land M.L."/>
            <person name="Hauser L."/>
            <person name="Kyrpides N."/>
            <person name="Mikhailova N."/>
            <person name="Ye Q."/>
            <person name="Zhou J."/>
            <person name="Richardson P."/>
            <person name="Fields M.W."/>
        </authorList>
    </citation>
    <scope>NUCLEOTIDE SEQUENCE [LARGE SCALE GENOMIC DNA]</scope>
    <source>
        <strain>QYMF</strain>
    </source>
</reference>
<evidence type="ECO:0000255" key="1">
    <source>
        <dbReference type="HAMAP-Rule" id="MF_00004"/>
    </source>
</evidence>
<organism>
    <name type="scientific">Alkaliphilus metalliredigens (strain QYMF)</name>
    <dbReference type="NCBI Taxonomy" id="293826"/>
    <lineage>
        <taxon>Bacteria</taxon>
        <taxon>Bacillati</taxon>
        <taxon>Bacillota</taxon>
        <taxon>Clostridia</taxon>
        <taxon>Peptostreptococcales</taxon>
        <taxon>Natronincolaceae</taxon>
        <taxon>Alkaliphilus</taxon>
    </lineage>
</organism>
<proteinExistence type="inferred from homology"/>
<gene>
    <name evidence="1" type="primary">apt</name>
    <name type="ordered locus">Amet_2352</name>
</gene>